<proteinExistence type="evidence at protein level"/>
<accession>P15429</accession>
<accession>Q5XIV3</accession>
<sequence>MAMQKIFAREILDSRGNPTVEVDLHTAKGRFRAAVPSGASTGIYEALELRDGDKSRYLGKGVLKAVEHINKTLGPALLEKKLSVVDQEKVDKFMIELDGTENKSKFGANAILGVSLAVCKAGAAEKGVPLYRHIADLAGNPDLVLPVPAFNVINGGSHAGNKLAMQEFMILPVGASSFKEAMRIGAEVYHHLKGVIKAKYGKDATNVGDEGGFAPNILENNEALELLKTAIQAAGYPDKVVIGMDVAASEFYRNGKYDLDFKSPDDPARHISGEKLGELYKSFIKNYPVVSIEDPFDQDDWATWTSFLSGVDIQIVGDDLTVTNPKRIAQAVEKKACNCLLLKVNQIGSVTESIQACKLAQSNGWGVMVSHRSGETEDTFIADLVVGLCTGQIKTGAPCRSERLAKYNQLMRIEEALGDKAVFAGRKFRNPKAK</sequence>
<comment type="function">
    <text evidence="3">Glycolytic enzyme that catalyzes the conversion of 2-phosphoglycerate to phosphoenolpyruvate. Appears to have a function in striated muscle development and regeneration.</text>
</comment>
<comment type="catalytic activity">
    <reaction evidence="3">
        <text>(2R)-2-phosphoglycerate = phosphoenolpyruvate + H2O</text>
        <dbReference type="Rhea" id="RHEA:10164"/>
        <dbReference type="ChEBI" id="CHEBI:15377"/>
        <dbReference type="ChEBI" id="CHEBI:58289"/>
        <dbReference type="ChEBI" id="CHEBI:58702"/>
        <dbReference type="EC" id="4.2.1.11"/>
    </reaction>
    <physiologicalReaction direction="left-to-right" evidence="5">
        <dbReference type="Rhea" id="RHEA:10165"/>
    </physiologicalReaction>
</comment>
<comment type="cofactor">
    <cofactor>
        <name>Mg(2+)</name>
        <dbReference type="ChEBI" id="CHEBI:18420"/>
    </cofactor>
    <text>Mg(2+) is required for catalysis and for stabilizing the dimer.</text>
</comment>
<comment type="pathway">
    <text evidence="5">Carbohydrate degradation; glycolysis; pyruvate from D-glyceraldehyde 3-phosphate: step 4/5.</text>
</comment>
<comment type="subunit">
    <text evidence="1">Mammalian enolase is composed of 3 isozyme subunits, alpha, beta and gamma, which can form homodimers or heterodimers which are cell-type and development-specific. Interacts with PNKD (By similarity).</text>
</comment>
<comment type="interaction">
    <interactant intactId="EBI-10817548">
        <id>P15429</id>
    </interactant>
    <interactant intactId="EBI-10769071">
        <id>Q5VU43-11</id>
        <label>PDE4DIP</label>
    </interactant>
    <organismsDiffer>true</organismsDiffer>
    <experiments>2</experiments>
</comment>
<comment type="subcellular location">
    <subcellularLocation>
        <location>Cytoplasm</location>
    </subcellularLocation>
    <text evidence="1">Localized to the Z line. Some colocalization with CKM at M-band (By similarity).</text>
</comment>
<comment type="tissue specificity">
    <text>The alpha/alpha homodimer is expressed in embryo and in most adult tissues. The alpha/beta heterodimer and the beta/beta homodimer are found in striated muscle, and the alpha/gamma heterodimer and the gamma/gamma homodimer in neurons.</text>
</comment>
<comment type="developmental stage">
    <text evidence="3">During ontogenesis, there is a transition from the alpha/alpha homodimer to the alpha/beta heterodimer in striated muscle cells.</text>
</comment>
<comment type="induction">
    <text>Thyroid hormones up-regulate expression during hindleg muscle development and down-regulate during cardiac muscle development. Decrease in ENO3 levels with aortic stenosis.</text>
</comment>
<comment type="similarity">
    <text evidence="4">Belongs to the enolase family.</text>
</comment>
<reference key="1">
    <citation type="journal article" date="1989" name="FEBS Lett.">
        <title>cDNA cloning and nucleotide sequence of rat muscle-specific enolase (beta beta enolase).</title>
        <authorList>
            <person name="Ohshima Y."/>
            <person name="Mitsui H."/>
            <person name="Takayama Y."/>
            <person name="Kushiya E."/>
            <person name="Sakimura K."/>
            <person name="Takahashi Y."/>
        </authorList>
    </citation>
    <scope>NUCLEOTIDE SEQUENCE [MRNA]</scope>
    <source>
        <strain>Wistar</strain>
        <tissue>Skeletal muscle</tissue>
    </source>
</reference>
<reference key="2">
    <citation type="journal article" date="2004" name="Genome Res.">
        <title>The status, quality, and expansion of the NIH full-length cDNA project: the Mammalian Gene Collection (MGC).</title>
        <authorList>
            <consortium name="The MGC Project Team"/>
        </authorList>
    </citation>
    <scope>NUCLEOTIDE SEQUENCE [LARGE SCALE MRNA]</scope>
    <source>
        <tissue>Heart</tissue>
    </source>
</reference>
<reference key="3">
    <citation type="journal article" date="1990" name="FEBS Lett.">
        <title>Structure and expression of rat muscle-specific enolase gene.</title>
        <authorList>
            <person name="Sakimura K."/>
            <person name="Kushiya E."/>
            <person name="Ohshima-Ichimura Y."/>
            <person name="Mitsui H."/>
            <person name="Takahashi Y."/>
        </authorList>
    </citation>
    <scope>NUCLEOTIDE SEQUENCE [GENOMIC DNA] OF 1-28</scope>
</reference>
<reference key="4">
    <citation type="submission" date="2007-07" db="UniProtKB">
        <authorList>
            <person name="Lubec G."/>
            <person name="Afjehi-Sadat L."/>
            <person name="Kang S.U."/>
        </authorList>
    </citation>
    <scope>PROTEIN SEQUENCE OF 10-28; 33-50; 106-120; 240-253; 257-262; 336-394 AND 407-412</scope>
    <scope>IDENTIFICATION BY MASS SPECTROMETRY</scope>
    <source>
        <strain>Sprague-Dawley</strain>
        <tissue>Brain</tissue>
        <tissue>Spinal cord</tissue>
    </source>
</reference>
<reference key="5">
    <citation type="journal article" date="1995" name="Am. J. Physiol.">
        <title>Differential expression of alpha- and beta-enolase genes during rat heart development and hypertrophy.</title>
        <authorList>
            <person name="Keller A."/>
            <person name="Rouzeau J.-D."/>
            <person name="Farhadian F."/>
            <person name="Wisnewsky C."/>
            <person name="Marotte F."/>
            <person name="Lamande N."/>
            <person name="Samuel J.L."/>
            <person name="Schwartz K."/>
            <person name="Lazar M."/>
            <person name="Lucas M."/>
        </authorList>
    </citation>
    <scope>DEVELOPMENTAL STAGE</scope>
    <scope>CATALYTIC ACTIVITY</scope>
    <scope>FUNCTION</scope>
</reference>
<reference key="6">
    <citation type="journal article" date="2000" name="Am. J. Physiol.">
        <title>Thyroid hormones differentially modulate enolase isozymes during rat skeletal and cardiac muscle development.</title>
        <authorList>
            <person name="Merkulova T."/>
            <person name="Keller A."/>
            <person name="Oliviero P."/>
            <person name="Marotte F."/>
            <person name="Samuel J.L."/>
            <person name="Rappaport L."/>
            <person name="Lamande N."/>
            <person name="Lucas M."/>
        </authorList>
    </citation>
    <scope>EFFECT OF THYROID HORMONES ON EXPRESSION</scope>
</reference>
<reference key="7">
    <citation type="journal article" date="2012" name="Nat. Commun.">
        <title>Quantitative maps of protein phosphorylation sites across 14 different rat organs and tissues.</title>
        <authorList>
            <person name="Lundby A."/>
            <person name="Secher A."/>
            <person name="Lage K."/>
            <person name="Nordsborg N.B."/>
            <person name="Dmytriyev A."/>
            <person name="Lundby C."/>
            <person name="Olsen J.V."/>
        </authorList>
    </citation>
    <scope>PHOSPHORYLATION [LARGE SCALE ANALYSIS] AT THR-72; SER-83; SER-157; THR-205; THR-229; TYR-236 AND SER-263</scope>
    <scope>IDENTIFICATION BY MASS SPECTROMETRY [LARGE SCALE ANALYSIS]</scope>
</reference>
<keyword id="KW-0007">Acetylation</keyword>
<keyword id="KW-0963">Cytoplasm</keyword>
<keyword id="KW-0903">Direct protein sequencing</keyword>
<keyword id="KW-0324">Glycolysis</keyword>
<keyword id="KW-0456">Lyase</keyword>
<keyword id="KW-0460">Magnesium</keyword>
<keyword id="KW-0479">Metal-binding</keyword>
<keyword id="KW-0597">Phosphoprotein</keyword>
<keyword id="KW-1185">Reference proteome</keyword>
<evidence type="ECO:0000250" key="1"/>
<evidence type="ECO:0000250" key="2">
    <source>
        <dbReference type="UniProtKB" id="P13929"/>
    </source>
</evidence>
<evidence type="ECO:0000269" key="3">
    <source>
    </source>
</evidence>
<evidence type="ECO:0000305" key="4"/>
<evidence type="ECO:0000305" key="5">
    <source>
    </source>
</evidence>
<evidence type="ECO:0007744" key="6">
    <source>
    </source>
</evidence>
<name>ENOB_RAT</name>
<dbReference type="EC" id="4.2.1.11" evidence="3"/>
<dbReference type="EMBL" id="Y00979">
    <property type="protein sequence ID" value="CAA68788.1"/>
    <property type="molecule type" value="mRNA"/>
</dbReference>
<dbReference type="EMBL" id="BC083566">
    <property type="protein sequence ID" value="AAH83566.1"/>
    <property type="molecule type" value="mRNA"/>
</dbReference>
<dbReference type="EMBL" id="X57774">
    <property type="protein sequence ID" value="CAA40920.1"/>
    <property type="molecule type" value="Genomic_DNA"/>
</dbReference>
<dbReference type="PIR" id="S02072">
    <property type="entry name" value="S02072"/>
</dbReference>
<dbReference type="RefSeq" id="NP_037081.2">
    <property type="nucleotide sequence ID" value="NM_012949.2"/>
</dbReference>
<dbReference type="RefSeq" id="XP_006246661.1">
    <property type="nucleotide sequence ID" value="XM_006246599.5"/>
</dbReference>
<dbReference type="RefSeq" id="XP_006246662.1">
    <property type="nucleotide sequence ID" value="XM_006246600.5"/>
</dbReference>
<dbReference type="SMR" id="P15429"/>
<dbReference type="BioGRID" id="247473">
    <property type="interactions" value="2"/>
</dbReference>
<dbReference type="FunCoup" id="P15429">
    <property type="interactions" value="1443"/>
</dbReference>
<dbReference type="IntAct" id="P15429">
    <property type="interactions" value="1"/>
</dbReference>
<dbReference type="STRING" id="10116.ENSRNOP00000005612"/>
<dbReference type="GlyGen" id="P15429">
    <property type="glycosylation" value="1 site, 1 O-linked glycan (1 site)"/>
</dbReference>
<dbReference type="iPTMnet" id="P15429"/>
<dbReference type="PhosphoSitePlus" id="P15429"/>
<dbReference type="SwissPalm" id="P15429"/>
<dbReference type="jPOST" id="P15429"/>
<dbReference type="PaxDb" id="10116-ENSRNOP00000005612"/>
<dbReference type="Ensembl" id="ENSRNOT00000005612.7">
    <property type="protein sequence ID" value="ENSRNOP00000005612.4"/>
    <property type="gene ID" value="ENSRNOG00000004078.8"/>
</dbReference>
<dbReference type="GeneID" id="25438"/>
<dbReference type="KEGG" id="rno:25438"/>
<dbReference type="UCSC" id="RGD:2555">
    <property type="organism name" value="rat"/>
</dbReference>
<dbReference type="AGR" id="RGD:2555"/>
<dbReference type="CTD" id="2027"/>
<dbReference type="RGD" id="2555">
    <property type="gene designation" value="Eno3"/>
</dbReference>
<dbReference type="eggNOG" id="KOG2670">
    <property type="taxonomic scope" value="Eukaryota"/>
</dbReference>
<dbReference type="GeneTree" id="ENSGT00950000182805"/>
<dbReference type="HOGENOM" id="CLU_031223_0_0_1"/>
<dbReference type="InParanoid" id="P15429"/>
<dbReference type="OMA" id="GMSITKI"/>
<dbReference type="OrthoDB" id="16779at9989"/>
<dbReference type="PhylomeDB" id="P15429"/>
<dbReference type="TreeFam" id="TF300391"/>
<dbReference type="Reactome" id="R-RNO-70171">
    <property type="pathway name" value="Glycolysis"/>
</dbReference>
<dbReference type="Reactome" id="R-RNO-70263">
    <property type="pathway name" value="Gluconeogenesis"/>
</dbReference>
<dbReference type="UniPathway" id="UPA00109">
    <property type="reaction ID" value="UER00187"/>
</dbReference>
<dbReference type="PRO" id="PR:P15429"/>
<dbReference type="Proteomes" id="UP000002494">
    <property type="component" value="Chromosome 10"/>
</dbReference>
<dbReference type="Bgee" id="ENSRNOG00000004078">
    <property type="expression patterns" value="Expressed in skeletal muscle tissue and 19 other cell types or tissues"/>
</dbReference>
<dbReference type="GO" id="GO:0005829">
    <property type="term" value="C:cytosol"/>
    <property type="evidence" value="ECO:0000266"/>
    <property type="project" value="RGD"/>
</dbReference>
<dbReference type="GO" id="GO:0016020">
    <property type="term" value="C:membrane"/>
    <property type="evidence" value="ECO:0000266"/>
    <property type="project" value="RGD"/>
</dbReference>
<dbReference type="GO" id="GO:0000015">
    <property type="term" value="C:phosphopyruvate hydratase complex"/>
    <property type="evidence" value="ECO:0000318"/>
    <property type="project" value="GO_Central"/>
</dbReference>
<dbReference type="GO" id="GO:0042802">
    <property type="term" value="F:identical protein binding"/>
    <property type="evidence" value="ECO:0000353"/>
    <property type="project" value="RGD"/>
</dbReference>
<dbReference type="GO" id="GO:0000287">
    <property type="term" value="F:magnesium ion binding"/>
    <property type="evidence" value="ECO:0007669"/>
    <property type="project" value="InterPro"/>
</dbReference>
<dbReference type="GO" id="GO:0004634">
    <property type="term" value="F:phosphopyruvate hydratase activity"/>
    <property type="evidence" value="ECO:0000314"/>
    <property type="project" value="RGD"/>
</dbReference>
<dbReference type="GO" id="GO:0044877">
    <property type="term" value="F:protein-containing complex binding"/>
    <property type="evidence" value="ECO:0000314"/>
    <property type="project" value="RGD"/>
</dbReference>
<dbReference type="GO" id="GO:0061621">
    <property type="term" value="P:canonical glycolysis"/>
    <property type="evidence" value="ECO:0000266"/>
    <property type="project" value="RGD"/>
</dbReference>
<dbReference type="GO" id="GO:0006096">
    <property type="term" value="P:glycolytic process"/>
    <property type="evidence" value="ECO:0000318"/>
    <property type="project" value="GO_Central"/>
</dbReference>
<dbReference type="GO" id="GO:0009410">
    <property type="term" value="P:response to xenobiotic stimulus"/>
    <property type="evidence" value="ECO:0000270"/>
    <property type="project" value="RGD"/>
</dbReference>
<dbReference type="GO" id="GO:0043403">
    <property type="term" value="P:skeletal muscle tissue regeneration"/>
    <property type="evidence" value="ECO:0000270"/>
    <property type="project" value="RGD"/>
</dbReference>
<dbReference type="CDD" id="cd03313">
    <property type="entry name" value="enolase"/>
    <property type="match status" value="1"/>
</dbReference>
<dbReference type="FunFam" id="3.30.390.10:FF:000001">
    <property type="entry name" value="Enolase"/>
    <property type="match status" value="1"/>
</dbReference>
<dbReference type="FunFam" id="3.20.20.120:FF:000002">
    <property type="entry name" value="Enolase 1"/>
    <property type="match status" value="1"/>
</dbReference>
<dbReference type="Gene3D" id="3.20.20.120">
    <property type="entry name" value="Enolase-like C-terminal domain"/>
    <property type="match status" value="1"/>
</dbReference>
<dbReference type="Gene3D" id="3.30.390.10">
    <property type="entry name" value="Enolase-like, N-terminal domain"/>
    <property type="match status" value="1"/>
</dbReference>
<dbReference type="HAMAP" id="MF_00318">
    <property type="entry name" value="Enolase"/>
    <property type="match status" value="1"/>
</dbReference>
<dbReference type="InterPro" id="IPR000941">
    <property type="entry name" value="Enolase"/>
</dbReference>
<dbReference type="InterPro" id="IPR036849">
    <property type="entry name" value="Enolase-like_C_sf"/>
</dbReference>
<dbReference type="InterPro" id="IPR029017">
    <property type="entry name" value="Enolase-like_N"/>
</dbReference>
<dbReference type="InterPro" id="IPR020810">
    <property type="entry name" value="Enolase_C"/>
</dbReference>
<dbReference type="InterPro" id="IPR020809">
    <property type="entry name" value="Enolase_CS"/>
</dbReference>
<dbReference type="InterPro" id="IPR020811">
    <property type="entry name" value="Enolase_N"/>
</dbReference>
<dbReference type="NCBIfam" id="TIGR01060">
    <property type="entry name" value="eno"/>
    <property type="match status" value="1"/>
</dbReference>
<dbReference type="PANTHER" id="PTHR11902:SF5">
    <property type="entry name" value="BETA-ENOLASE"/>
    <property type="match status" value="1"/>
</dbReference>
<dbReference type="PANTHER" id="PTHR11902">
    <property type="entry name" value="ENOLASE"/>
    <property type="match status" value="1"/>
</dbReference>
<dbReference type="Pfam" id="PF00113">
    <property type="entry name" value="Enolase_C"/>
    <property type="match status" value="1"/>
</dbReference>
<dbReference type="Pfam" id="PF03952">
    <property type="entry name" value="Enolase_N"/>
    <property type="match status" value="1"/>
</dbReference>
<dbReference type="PIRSF" id="PIRSF001400">
    <property type="entry name" value="Enolase"/>
    <property type="match status" value="1"/>
</dbReference>
<dbReference type="PRINTS" id="PR00148">
    <property type="entry name" value="ENOLASE"/>
</dbReference>
<dbReference type="SFLD" id="SFLDS00001">
    <property type="entry name" value="Enolase"/>
    <property type="match status" value="1"/>
</dbReference>
<dbReference type="SFLD" id="SFLDF00002">
    <property type="entry name" value="enolase"/>
    <property type="match status" value="1"/>
</dbReference>
<dbReference type="SMART" id="SM01192">
    <property type="entry name" value="Enolase_C"/>
    <property type="match status" value="1"/>
</dbReference>
<dbReference type="SMART" id="SM01193">
    <property type="entry name" value="Enolase_N"/>
    <property type="match status" value="1"/>
</dbReference>
<dbReference type="SUPFAM" id="SSF51604">
    <property type="entry name" value="Enolase C-terminal domain-like"/>
    <property type="match status" value="1"/>
</dbReference>
<dbReference type="SUPFAM" id="SSF54826">
    <property type="entry name" value="Enolase N-terminal domain-like"/>
    <property type="match status" value="1"/>
</dbReference>
<dbReference type="PROSITE" id="PS00164">
    <property type="entry name" value="ENOLASE"/>
    <property type="match status" value="1"/>
</dbReference>
<protein>
    <recommendedName>
        <fullName>Beta-enolase</fullName>
        <ecNumber evidence="3">4.2.1.11</ecNumber>
    </recommendedName>
    <alternativeName>
        <fullName>2-phospho-D-glycerate hydro-lyase</fullName>
    </alternativeName>
    <alternativeName>
        <fullName>Enolase 3</fullName>
    </alternativeName>
    <alternativeName>
        <fullName>Muscle-specific enolase</fullName>
        <shortName>MSE</shortName>
    </alternativeName>
    <alternativeName>
        <fullName>Skeletal muscle enolase</fullName>
    </alternativeName>
</protein>
<feature type="initiator methionine" description="Removed" evidence="2">
    <location>
        <position position="1"/>
    </location>
</feature>
<feature type="chain" id="PRO_0000134110" description="Beta-enolase">
    <location>
        <begin position="2"/>
        <end position="434"/>
    </location>
</feature>
<feature type="active site" description="Proton donor" evidence="1">
    <location>
        <position position="210"/>
    </location>
</feature>
<feature type="active site" description="Proton acceptor" evidence="1">
    <location>
        <position position="343"/>
    </location>
</feature>
<feature type="binding site" evidence="1">
    <location>
        <position position="158"/>
    </location>
    <ligand>
        <name>substrate</name>
    </ligand>
</feature>
<feature type="binding site" evidence="1">
    <location>
        <position position="167"/>
    </location>
    <ligand>
        <name>substrate</name>
    </ligand>
</feature>
<feature type="binding site" evidence="1">
    <location>
        <position position="245"/>
    </location>
    <ligand>
        <name>Mg(2+)</name>
        <dbReference type="ChEBI" id="CHEBI:18420"/>
    </ligand>
</feature>
<feature type="binding site" evidence="1">
    <location>
        <position position="293"/>
    </location>
    <ligand>
        <name>Mg(2+)</name>
        <dbReference type="ChEBI" id="CHEBI:18420"/>
    </ligand>
</feature>
<feature type="binding site" evidence="1">
    <location>
        <position position="293"/>
    </location>
    <ligand>
        <name>substrate</name>
    </ligand>
</feature>
<feature type="binding site" evidence="1">
    <location>
        <position position="318"/>
    </location>
    <ligand>
        <name>Mg(2+)</name>
        <dbReference type="ChEBI" id="CHEBI:18420"/>
    </ligand>
</feature>
<feature type="binding site" evidence="1">
    <location>
        <position position="318"/>
    </location>
    <ligand>
        <name>substrate</name>
    </ligand>
</feature>
<feature type="binding site" evidence="1">
    <location>
        <begin position="370"/>
        <end position="373"/>
    </location>
    <ligand>
        <name>substrate</name>
    </ligand>
</feature>
<feature type="binding site" evidence="1">
    <location>
        <position position="394"/>
    </location>
    <ligand>
        <name>substrate</name>
    </ligand>
</feature>
<feature type="modified residue" description="N-acetylalanine" evidence="2">
    <location>
        <position position="2"/>
    </location>
</feature>
<feature type="modified residue" description="Phosphothreonine" evidence="6">
    <location>
        <position position="72"/>
    </location>
</feature>
<feature type="modified residue" description="Phosphoserine" evidence="6">
    <location>
        <position position="83"/>
    </location>
</feature>
<feature type="modified residue" description="Phosphoserine" evidence="6">
    <location>
        <position position="157"/>
    </location>
</feature>
<feature type="modified residue" description="Phosphoserine" evidence="2">
    <location>
        <position position="176"/>
    </location>
</feature>
<feature type="modified residue" description="Phosphothreonine" evidence="6">
    <location>
        <position position="205"/>
    </location>
</feature>
<feature type="modified residue" description="Phosphothreonine" evidence="6">
    <location>
        <position position="229"/>
    </location>
</feature>
<feature type="modified residue" description="Phosphotyrosine" evidence="6">
    <location>
        <position position="236"/>
    </location>
</feature>
<feature type="modified residue" description="Phosphoserine" evidence="6">
    <location>
        <position position="263"/>
    </location>
</feature>
<feature type="sequence conflict" description="In Ref. 1; CAA68788." evidence="4" ref="1">
    <original>L</original>
    <variation>P</variation>
    <location>
        <position position="63"/>
    </location>
</feature>
<feature type="sequence conflict" description="In Ref. 1; CAA68788." evidence="4" ref="1">
    <original>SSFKEAM</original>
    <variation>KLFQGSQ</variation>
    <location>
        <begin position="176"/>
        <end position="182"/>
    </location>
</feature>
<feature type="sequence conflict" description="In Ref. 1; CAA68788." evidence="4" ref="1">
    <original>L</original>
    <variation>P</variation>
    <location>
        <position position="279"/>
    </location>
</feature>
<feature type="sequence conflict" description="In Ref. 1; CAA68788." evidence="4" ref="1">
    <original>Q</original>
    <variation>L</variation>
    <location>
        <position position="355"/>
    </location>
</feature>
<feature type="sequence conflict" description="In Ref. 1; CAA68788." evidence="4" ref="1">
    <original>I</original>
    <variation>V</variation>
    <location>
        <position position="381"/>
    </location>
</feature>
<organism>
    <name type="scientific">Rattus norvegicus</name>
    <name type="common">Rat</name>
    <dbReference type="NCBI Taxonomy" id="10116"/>
    <lineage>
        <taxon>Eukaryota</taxon>
        <taxon>Metazoa</taxon>
        <taxon>Chordata</taxon>
        <taxon>Craniata</taxon>
        <taxon>Vertebrata</taxon>
        <taxon>Euteleostomi</taxon>
        <taxon>Mammalia</taxon>
        <taxon>Eutheria</taxon>
        <taxon>Euarchontoglires</taxon>
        <taxon>Glires</taxon>
        <taxon>Rodentia</taxon>
        <taxon>Myomorpha</taxon>
        <taxon>Muroidea</taxon>
        <taxon>Muridae</taxon>
        <taxon>Murinae</taxon>
        <taxon>Rattus</taxon>
    </lineage>
</organism>
<gene>
    <name type="primary">Eno3</name>
    <name type="synonym">Eno-3</name>
</gene>